<proteinExistence type="evidence at protein level"/>
<organism>
    <name type="scientific">Actinidia deliciosa</name>
    <name type="common">Kiwi</name>
    <dbReference type="NCBI Taxonomy" id="3627"/>
    <lineage>
        <taxon>Eukaryota</taxon>
        <taxon>Viridiplantae</taxon>
        <taxon>Streptophyta</taxon>
        <taxon>Embryophyta</taxon>
        <taxon>Tracheophyta</taxon>
        <taxon>Spermatophyta</taxon>
        <taxon>Magnoliopsida</taxon>
        <taxon>eudicotyledons</taxon>
        <taxon>Gunneridae</taxon>
        <taxon>Pentapetalae</taxon>
        <taxon>asterids</taxon>
        <taxon>Ericales</taxon>
        <taxon>Actinidiaceae</taxon>
        <taxon>Actinidia</taxon>
    </lineage>
</organism>
<evidence type="ECO:0000256" key="1">
    <source>
        <dbReference type="SAM" id="MobiDB-lite"/>
    </source>
</evidence>
<evidence type="ECO:0000269" key="2">
    <source>
    </source>
</evidence>
<evidence type="ECO:0000269" key="3">
    <source>
    </source>
</evidence>
<evidence type="ECO:0000269" key="4">
    <source>
    </source>
</evidence>
<evidence type="ECO:0000269" key="5">
    <source>
    </source>
</evidence>
<evidence type="ECO:0000303" key="6">
    <source>
    </source>
</evidence>
<evidence type="ECO:0000303" key="7">
    <source>
    </source>
</evidence>
<evidence type="ECO:0000303" key="8">
    <source>
    </source>
</evidence>
<evidence type="ECO:0000305" key="9"/>
<evidence type="ECO:0000305" key="10">
    <source>
    </source>
</evidence>
<evidence type="ECO:0007744" key="11">
    <source>
        <dbReference type="PDB" id="4X9U"/>
    </source>
</evidence>
<evidence type="ECO:0007829" key="12">
    <source>
        <dbReference type="PDB" id="4X9U"/>
    </source>
</evidence>
<dbReference type="EMBL" id="JX905292">
    <property type="protein sequence ID" value="AGC39166.1"/>
    <property type="molecule type" value="mRNA"/>
</dbReference>
<dbReference type="PDB" id="4X9U">
    <property type="method" value="X-ray"/>
    <property type="resolution" value="2.10 A"/>
    <property type="chains" value="A/B=25-213"/>
</dbReference>
<dbReference type="PDBsum" id="4X9U"/>
<dbReference type="SMR" id="P84527"/>
<dbReference type="Allergome" id="2821">
    <property type="allergen name" value="Act d 5"/>
</dbReference>
<dbReference type="Allergome" id="3588">
    <property type="allergen name" value="Act d 5.0101"/>
</dbReference>
<dbReference type="EvolutionaryTrace" id="P84527"/>
<dbReference type="GO" id="GO:0005576">
    <property type="term" value="C:extracellular region"/>
    <property type="evidence" value="ECO:0007669"/>
    <property type="project" value="UniProtKB-SubCell"/>
</dbReference>
<dbReference type="CDD" id="cd22270">
    <property type="entry name" value="DPBB_kiwellin-like"/>
    <property type="match status" value="1"/>
</dbReference>
<dbReference type="Gene3D" id="2.40.40.10">
    <property type="entry name" value="RlpA-like domain"/>
    <property type="match status" value="1"/>
</dbReference>
<dbReference type="InterPro" id="IPR039271">
    <property type="entry name" value="Kiwellin-like"/>
</dbReference>
<dbReference type="InterPro" id="IPR036908">
    <property type="entry name" value="RlpA-like_sf"/>
</dbReference>
<dbReference type="PANTHER" id="PTHR33191">
    <property type="entry name" value="RIPENING-RELATED PROTEIN 2-RELATED"/>
    <property type="match status" value="1"/>
</dbReference>
<dbReference type="PANTHER" id="PTHR33191:SF9">
    <property type="entry name" value="RIPENING-RELATED PROTEIN 2-RELATED"/>
    <property type="match status" value="1"/>
</dbReference>
<dbReference type="Pfam" id="PF24300">
    <property type="entry name" value="KWL1"/>
    <property type="match status" value="1"/>
</dbReference>
<dbReference type="SUPFAM" id="SSF50685">
    <property type="entry name" value="Barwin-like endoglucanases"/>
    <property type="match status" value="1"/>
</dbReference>
<keyword id="KW-0002">3D-structure</keyword>
<keyword id="KW-0020">Allergen</keyword>
<keyword id="KW-0903">Direct protein sequencing</keyword>
<keyword id="KW-1015">Disulfide bond</keyword>
<keyword id="KW-0379">Hydroxylation</keyword>
<keyword id="KW-0964">Secreted</keyword>
<keyword id="KW-0732">Signal</keyword>
<reference key="1">
    <citation type="journal article" date="2013" name="J. Agric. Food Chem.">
        <title>Diversity and relative levels of actinidin, kiwellin, and thaumatin-like allergens in 15 varieties of kiwifruit (Actinidia).</title>
        <authorList>
            <person name="Maddumage R."/>
            <person name="Nieuwenhuizen N.J."/>
            <person name="Bulley S.M."/>
            <person name="Cooney J.M."/>
            <person name="Green S.A."/>
            <person name="Atkinson R.G."/>
        </authorList>
    </citation>
    <scope>NUCLEOTIDE SEQUENCE [MRNA]</scope>
    <scope>IDENTIFICATION BY MASS SPECTROMETRY</scope>
</reference>
<reference key="2">
    <citation type="journal article" date="2005" name="Protein J.">
        <title>Kiwellin, a novel protein from kiwi fruit. Purification, biochemical characterization and identification as an allergen.</title>
        <authorList>
            <person name="Tamburrini M."/>
            <person name="Cerasuolo I."/>
            <person name="Carratore V."/>
            <person name="Stanziola A.A."/>
            <person name="Zofra S."/>
            <person name="Romano L."/>
            <person name="Camardella L."/>
            <person name="Ciardiello M.A."/>
        </authorList>
    </citation>
    <scope>PROTEIN SEQUENCE OF 25-213</scope>
    <scope>ALLERGEN</scope>
    <scope>VARIANT HIS-85</scope>
    <source>
        <tissue evidence="2">Fruit</tissue>
    </source>
</reference>
<reference key="3">
    <citation type="journal article" date="2008" name="J. Pept. Sci.">
        <title>Kissper, a kiwi fruit peptide with channel-like activity: structural and functional features.</title>
        <authorList>
            <person name="Ciardiello M.A."/>
            <person name="Meleleo D."/>
            <person name="Saviano G."/>
            <person name="Crescenzo R."/>
            <person name="Carratore V."/>
            <person name="Camardella L."/>
            <person name="Gallucci E."/>
            <person name="Micelli S."/>
            <person name="Tancredi T."/>
            <person name="Picone D."/>
            <person name="Tamburrini M."/>
        </authorList>
    </citation>
    <scope>PROTEIN SEQUENCE OF 25-63</scope>
    <scope>FUNCTION</scope>
    <source>
        <tissue evidence="3">Fruit</tissue>
    </source>
</reference>
<reference key="4">
    <citation type="journal article" date="2008" name="J. Agric. Food Chem.">
        <title>Kiwellin, a modular protein from green and gold kiwi fruits: evidence of in vivo and in vitro processing and IgE binding.</title>
        <authorList>
            <person name="Tuppo L."/>
            <person name="Giangrieco I."/>
            <person name="Palazzo P."/>
            <person name="Bernardi M.L."/>
            <person name="Scala E."/>
            <person name="Carratore V."/>
            <person name="Tamburrini M."/>
            <person name="Mari A."/>
            <person name="Ciardiello M.A."/>
        </authorList>
    </citation>
    <scope>PROTEIN SEQUENCE OF 64-213</scope>
    <scope>ALLERGEN</scope>
    <scope>PROTEOLYTIC CLEAVAGE BY ACTINIDIN</scope>
    <source>
        <strain evidence="4">cv. Hayward</strain>
        <tissue evidence="4">Fruit</tissue>
    </source>
</reference>
<reference key="5">
    <citation type="journal article" date="2015" name="J. Agric. Food Chem.">
        <title>Elusive structural, functional, and immunological features of Act d 5, the green kiwifruit kiwellin.</title>
        <authorList>
            <person name="Offermann L.R."/>
            <person name="Giangrieco I."/>
            <person name="Perdue M.L."/>
            <person name="Zuzzi S."/>
            <person name="Santoro M."/>
            <person name="Tamburrini M."/>
            <person name="Cosgrove D.J."/>
            <person name="Mari A."/>
            <person name="Ciardiello M.A."/>
            <person name="Chruszcz M."/>
        </authorList>
    </citation>
    <scope>X-RAY CRYSTALLOGRAPHY (2.10 ANGSTROMS) OF 25-213</scope>
    <scope>DISULFIDE BONDS</scope>
    <scope>HYDROXYLATION AT PRO-65 AND PRO-67</scope>
</reference>
<comment type="function">
    <molecule>Kissper</molecule>
    <text evidence="10">pH-dependent, voltage-gated and anion-selective pore-forming peptide.</text>
</comment>
<comment type="subcellular location">
    <subcellularLocation>
        <location evidence="9">Secreted</location>
    </subcellularLocation>
</comment>
<comment type="PTM">
    <text evidence="4">Undergoes proteolytic cleavage by actinidin to produce kissper and KiTH (PubMed:18442249). Three forms of KiTH are produced by cleavage at different sites, the main form produced in vivo is KiTH-1 (PubMed:18442249).</text>
</comment>
<comment type="allergen">
    <text evidence="2 4">Causes an allergic reaction in human (PubMed:16328735, PubMed:18442249). Binds to IgE from the serum of kiwi-allergic patients.</text>
</comment>
<comment type="similarity">
    <text evidence="9">Belongs to the kiwellin family.</text>
</comment>
<feature type="signal peptide" evidence="2">
    <location>
        <begin position="1"/>
        <end position="24"/>
    </location>
</feature>
<feature type="chain" id="PRO_0000083396" description="Kiwellin">
    <location>
        <begin position="25"/>
        <end position="213"/>
    </location>
</feature>
<feature type="peptide" id="PRO_0000318767" description="Kissper" evidence="3 4">
    <location>
        <begin position="25"/>
        <end position="63"/>
    </location>
</feature>
<feature type="chain" id="PRO_0000341246" description="KiTH-3" evidence="4">
    <location>
        <begin position="62"/>
        <end position="213"/>
    </location>
</feature>
<feature type="chain" id="PRO_0000341247" description="KiTH-1" evidence="4">
    <location>
        <begin position="64"/>
        <end position="213"/>
    </location>
</feature>
<feature type="chain" id="PRO_0000341248" description="KiTH-2" evidence="4">
    <location>
        <begin position="66"/>
        <end position="213"/>
    </location>
</feature>
<feature type="region of interest" description="Disordered" evidence="1">
    <location>
        <begin position="91"/>
        <end position="121"/>
    </location>
</feature>
<feature type="compositionally biased region" description="Polar residues" evidence="1">
    <location>
        <begin position="93"/>
        <end position="107"/>
    </location>
</feature>
<feature type="modified residue" description="4-hydroxyproline" evidence="5">
    <location>
        <position position="65"/>
    </location>
</feature>
<feature type="modified residue" description="4-hydroxyproline" evidence="5">
    <location>
        <position position="67"/>
    </location>
</feature>
<feature type="disulfide bond" evidence="5 11">
    <location>
        <begin position="28"/>
        <end position="60"/>
    </location>
</feature>
<feature type="disulfide bond" evidence="5 11">
    <location>
        <begin position="32"/>
        <end position="44"/>
    </location>
</feature>
<feature type="disulfide bond" evidence="5 11">
    <location>
        <begin position="38"/>
        <end position="49"/>
    </location>
</feature>
<feature type="disulfide bond" evidence="5 11">
    <location>
        <begin position="72"/>
        <end position="90"/>
    </location>
</feature>
<feature type="disulfide bond" evidence="5 11">
    <location>
        <begin position="80"/>
        <end position="172"/>
    </location>
</feature>
<feature type="disulfide bond" evidence="5 11">
    <location>
        <begin position="119"/>
        <end position="144"/>
    </location>
</feature>
<feature type="disulfide bond" evidence="5 11">
    <location>
        <begin position="166"/>
        <end position="172"/>
    </location>
</feature>
<feature type="sequence variant" evidence="2">
    <original>Y</original>
    <variation>H</variation>
    <location>
        <position position="85"/>
    </location>
</feature>
<feature type="sequence conflict" description="In Ref. 2; AA sequence." ref="2">
    <original>PSP</original>
    <variation>HSH</variation>
    <location>
        <begin position="65"/>
        <end position="67"/>
    </location>
</feature>
<feature type="sequence conflict" description="In Ref. 1; AGC39166." evidence="9" ref="1">
    <original>D</original>
    <variation>G</variation>
    <location>
        <position position="113"/>
    </location>
</feature>
<feature type="sequence conflict" description="In Ref. 1; AGC39166." evidence="9" ref="1">
    <original>N</original>
    <variation>S</variation>
    <location>
        <position position="125"/>
    </location>
</feature>
<feature type="turn" evidence="12">
    <location>
        <begin position="53"/>
        <end position="56"/>
    </location>
</feature>
<feature type="turn" evidence="12">
    <location>
        <begin position="59"/>
        <end position="62"/>
    </location>
</feature>
<feature type="strand" evidence="12">
    <location>
        <begin position="76"/>
        <end position="79"/>
    </location>
</feature>
<feature type="strand" evidence="12">
    <location>
        <begin position="84"/>
        <end position="87"/>
    </location>
</feature>
<feature type="strand" evidence="12">
    <location>
        <begin position="98"/>
        <end position="104"/>
    </location>
</feature>
<feature type="strand" evidence="12">
    <location>
        <begin position="111"/>
        <end position="117"/>
    </location>
</feature>
<feature type="turn" evidence="12">
    <location>
        <begin position="118"/>
        <end position="121"/>
    </location>
</feature>
<feature type="strand" evidence="12">
    <location>
        <begin position="130"/>
        <end position="134"/>
    </location>
</feature>
<feature type="helix" evidence="12">
    <location>
        <begin position="135"/>
        <end position="138"/>
    </location>
</feature>
<feature type="helix" evidence="12">
    <location>
        <begin position="139"/>
        <end position="141"/>
    </location>
</feature>
<feature type="turn" evidence="12">
    <location>
        <begin position="142"/>
        <end position="145"/>
    </location>
</feature>
<feature type="strand" evidence="12">
    <location>
        <begin position="147"/>
        <end position="151"/>
    </location>
</feature>
<feature type="strand" evidence="12">
    <location>
        <begin position="157"/>
        <end position="166"/>
    </location>
</feature>
<feature type="helix" evidence="12">
    <location>
        <begin position="174"/>
        <end position="176"/>
    </location>
</feature>
<feature type="strand" evidence="12">
    <location>
        <begin position="184"/>
        <end position="189"/>
    </location>
</feature>
<feature type="helix" evidence="12">
    <location>
        <begin position="191"/>
        <end position="196"/>
    </location>
</feature>
<feature type="helix" evidence="12">
    <location>
        <begin position="201"/>
        <end position="203"/>
    </location>
</feature>
<feature type="strand" evidence="12">
    <location>
        <begin position="205"/>
        <end position="212"/>
    </location>
</feature>
<name>KIWEL_ACTDE</name>
<accession>P84527</accession>
<accession>L7TRW4</accession>
<accession>P83975</accession>
<accession>P83976</accession>
<protein>
    <recommendedName>
        <fullName evidence="6">Kiwellin</fullName>
    </recommendedName>
    <allergenName>Act d 5</allergenName>
    <component>
        <recommendedName>
            <fullName evidence="7">Kissper</fullName>
        </recommendedName>
    </component>
    <component>
        <recommendedName>
            <fullName evidence="8">KiTH-3</fullName>
        </recommendedName>
    </component>
    <component>
        <recommendedName>
            <fullName evidence="8">KiTH-1</fullName>
        </recommendedName>
    </component>
    <component>
        <recommendedName>
            <fullName evidence="8">KiTH-2</fullName>
        </recommendedName>
    </component>
</protein>
<sequence>MAQLALLLLSLFLTLISLAPPGASISSCNGPCRDLNDCDGQLICIKGKCNDDPQVGTHICRGTTPSPQPGGCKPSGTLTCRGKSYPTYDCSPPVTSSTPAKLTNNDFSEGGDDGGPSECDESYHNNNERIVALSTGWYNGGSRCGKMIRITASNGKSVSAKVVDECDSRHGCDKEHAGQPPCRNNIVDGSNAVWSALGLDKNVGVVDITWSMA</sequence>